<protein>
    <recommendedName>
        <fullName>Stress response regulator protein 1</fullName>
    </recommendedName>
</protein>
<sequence>MTRLTRPMVRSPISLPSTPSQLLHSASLSSSPSSPSLVQQSHSYHGDYFSIKPKLSLDFAHSSDNFSDESELENNSTSFVDDDDIVKVRETFDNISIDIGASNPFAKNKHQWSYSPITPYDIVDENHTITVSTPKTNSQLLYTTTSPQLPRKETLSLKFGPSTLKSTVSTSTSTSTSTSTGTNTETKTVTTAAKSTNFTLSMPNLQQHKFLLVDDNLINLKILNRILLKLYPKAQITQVLDSTKVAKLVEENEYDAVFIDIEMPVVNGVQIAQFIRSDVSKDDLTVIAVTTRNSKEDLALFEKTGIDYTFGKPLNYKLDFMANVIDEIIERRKGQMIKKSVSSVESGVSLCSKESTNTLLIA</sequence>
<proteinExistence type="inferred from homology"/>
<name>SRR1_LODEL</name>
<dbReference type="EMBL" id="CH981527">
    <property type="protein sequence ID" value="EDK45059.1"/>
    <property type="molecule type" value="Genomic_DNA"/>
</dbReference>
<dbReference type="RefSeq" id="XP_001525310.1">
    <property type="nucleotide sequence ID" value="XM_001525260.1"/>
</dbReference>
<dbReference type="SMR" id="A5E0V1"/>
<dbReference type="STRING" id="379508.A5E0V1"/>
<dbReference type="GeneID" id="5232821"/>
<dbReference type="KEGG" id="lel:PVL30_002734"/>
<dbReference type="VEuPathDB" id="FungiDB:LELG_03238"/>
<dbReference type="eggNOG" id="ENOG502SFN6">
    <property type="taxonomic scope" value="Eukaryota"/>
</dbReference>
<dbReference type="HOGENOM" id="CLU_065405_0_0_1"/>
<dbReference type="InParanoid" id="A5E0V1"/>
<dbReference type="OMA" id="FHKPLNY"/>
<dbReference type="OrthoDB" id="303614at2759"/>
<dbReference type="Proteomes" id="UP000001996">
    <property type="component" value="Unassembled WGS sequence"/>
</dbReference>
<dbReference type="GO" id="GO:0036180">
    <property type="term" value="P:filamentous growth of a population of unicellular organisms in response to biotic stimulus"/>
    <property type="evidence" value="ECO:0007669"/>
    <property type="project" value="UniProtKB-ARBA"/>
</dbReference>
<dbReference type="GO" id="GO:0000160">
    <property type="term" value="P:phosphorelay signal transduction system"/>
    <property type="evidence" value="ECO:0007669"/>
    <property type="project" value="InterPro"/>
</dbReference>
<dbReference type="GO" id="GO:1900445">
    <property type="term" value="P:positive regulation of filamentous growth of a population of unicellular organisms in response to biotic stimulus"/>
    <property type="evidence" value="ECO:0007669"/>
    <property type="project" value="UniProtKB-ARBA"/>
</dbReference>
<dbReference type="CDD" id="cd17546">
    <property type="entry name" value="REC_hyHK_CKI1_RcsC-like"/>
    <property type="match status" value="1"/>
</dbReference>
<dbReference type="Gene3D" id="3.40.50.2300">
    <property type="match status" value="1"/>
</dbReference>
<dbReference type="InterPro" id="IPR050956">
    <property type="entry name" value="2C_system_His_kinase"/>
</dbReference>
<dbReference type="InterPro" id="IPR011006">
    <property type="entry name" value="CheY-like_superfamily"/>
</dbReference>
<dbReference type="InterPro" id="IPR001789">
    <property type="entry name" value="Sig_transdc_resp-reg_receiver"/>
</dbReference>
<dbReference type="PANTHER" id="PTHR43719:SF28">
    <property type="entry name" value="PEROXIDE STRESS-ACTIVATED HISTIDINE KINASE MAK1-RELATED"/>
    <property type="match status" value="1"/>
</dbReference>
<dbReference type="PANTHER" id="PTHR43719">
    <property type="entry name" value="TWO-COMPONENT HISTIDINE KINASE"/>
    <property type="match status" value="1"/>
</dbReference>
<dbReference type="Pfam" id="PF00072">
    <property type="entry name" value="Response_reg"/>
    <property type="match status" value="1"/>
</dbReference>
<dbReference type="SMART" id="SM00448">
    <property type="entry name" value="REC"/>
    <property type="match status" value="1"/>
</dbReference>
<dbReference type="SUPFAM" id="SSF52172">
    <property type="entry name" value="CheY-like"/>
    <property type="match status" value="1"/>
</dbReference>
<dbReference type="PROSITE" id="PS50110">
    <property type="entry name" value="RESPONSE_REGULATORY"/>
    <property type="match status" value="1"/>
</dbReference>
<reference key="1">
    <citation type="journal article" date="2009" name="Nature">
        <title>Evolution of pathogenicity and sexual reproduction in eight Candida genomes.</title>
        <authorList>
            <person name="Butler G."/>
            <person name="Rasmussen M.D."/>
            <person name="Lin M.F."/>
            <person name="Santos M.A.S."/>
            <person name="Sakthikumar S."/>
            <person name="Munro C.A."/>
            <person name="Rheinbay E."/>
            <person name="Grabherr M."/>
            <person name="Forche A."/>
            <person name="Reedy J.L."/>
            <person name="Agrafioti I."/>
            <person name="Arnaud M.B."/>
            <person name="Bates S."/>
            <person name="Brown A.J.P."/>
            <person name="Brunke S."/>
            <person name="Costanzo M.C."/>
            <person name="Fitzpatrick D.A."/>
            <person name="de Groot P.W.J."/>
            <person name="Harris D."/>
            <person name="Hoyer L.L."/>
            <person name="Hube B."/>
            <person name="Klis F.M."/>
            <person name="Kodira C."/>
            <person name="Lennard N."/>
            <person name="Logue M.E."/>
            <person name="Martin R."/>
            <person name="Neiman A.M."/>
            <person name="Nikolaou E."/>
            <person name="Quail M.A."/>
            <person name="Quinn J."/>
            <person name="Santos M.C."/>
            <person name="Schmitzberger F.F."/>
            <person name="Sherlock G."/>
            <person name="Shah P."/>
            <person name="Silverstein K.A.T."/>
            <person name="Skrzypek M.S."/>
            <person name="Soll D."/>
            <person name="Staggs R."/>
            <person name="Stansfield I."/>
            <person name="Stumpf M.P.H."/>
            <person name="Sudbery P.E."/>
            <person name="Srikantha T."/>
            <person name="Zeng Q."/>
            <person name="Berman J."/>
            <person name="Berriman M."/>
            <person name="Heitman J."/>
            <person name="Gow N.A.R."/>
            <person name="Lorenz M.C."/>
            <person name="Birren B.W."/>
            <person name="Kellis M."/>
            <person name="Cuomo C.A."/>
        </authorList>
    </citation>
    <scope>NUCLEOTIDE SEQUENCE [LARGE SCALE GENOMIC DNA]</scope>
    <source>
        <strain>ATCC 11503 / BCRC 21390 / CBS 2605 / JCM 1781 / NBRC 1676 / NRRL YB-4239</strain>
    </source>
</reference>
<accession>A5E0V1</accession>
<comment type="function">
    <text evidence="1">Required for stress adaptation, morphogenesis and virulence.</text>
</comment>
<keyword id="KW-0597">Phosphoprotein</keyword>
<keyword id="KW-1185">Reference proteome</keyword>
<feature type="chain" id="PRO_0000413391" description="Stress response regulator protein 1">
    <location>
        <begin position="1"/>
        <end position="362"/>
    </location>
</feature>
<feature type="domain" description="Response regulatory" evidence="2">
    <location>
        <begin position="209"/>
        <end position="327"/>
    </location>
</feature>
<feature type="region of interest" description="Disordered" evidence="3">
    <location>
        <begin position="1"/>
        <end position="39"/>
    </location>
</feature>
<feature type="region of interest" description="Disordered" evidence="3">
    <location>
        <begin position="163"/>
        <end position="188"/>
    </location>
</feature>
<feature type="compositionally biased region" description="Low complexity" evidence="3">
    <location>
        <begin position="19"/>
        <end position="39"/>
    </location>
</feature>
<feature type="modified residue" description="4-aspartylphosphate" evidence="2">
    <location>
        <position position="260"/>
    </location>
</feature>
<organism>
    <name type="scientific">Lodderomyces elongisporus (strain ATCC 11503 / CBS 2605 / JCM 1781 / NBRC 1676 / NRRL YB-4239)</name>
    <name type="common">Yeast</name>
    <name type="synonym">Saccharomyces elongisporus</name>
    <dbReference type="NCBI Taxonomy" id="379508"/>
    <lineage>
        <taxon>Eukaryota</taxon>
        <taxon>Fungi</taxon>
        <taxon>Dikarya</taxon>
        <taxon>Ascomycota</taxon>
        <taxon>Saccharomycotina</taxon>
        <taxon>Pichiomycetes</taxon>
        <taxon>Debaryomycetaceae</taxon>
        <taxon>Candida/Lodderomyces clade</taxon>
        <taxon>Lodderomyces</taxon>
    </lineage>
</organism>
<gene>
    <name type="primary">SRR1</name>
    <name type="ORF">LELG_03238</name>
</gene>
<evidence type="ECO:0000250" key="1"/>
<evidence type="ECO:0000255" key="2">
    <source>
        <dbReference type="PROSITE-ProRule" id="PRU00169"/>
    </source>
</evidence>
<evidence type="ECO:0000256" key="3">
    <source>
        <dbReference type="SAM" id="MobiDB-lite"/>
    </source>
</evidence>